<accession>A9ADJ9</accession>
<proteinExistence type="inferred from homology"/>
<keyword id="KW-1185">Reference proteome</keyword>
<keyword id="KW-0687">Ribonucleoprotein</keyword>
<keyword id="KW-0689">Ribosomal protein</keyword>
<keyword id="KW-0694">RNA-binding</keyword>
<keyword id="KW-0699">rRNA-binding</keyword>
<sequence>MGQKIHPTGFRLAVSRNWASRWYANNNNFAAMLQEDIGVREYLKKKLKNASVGRVVIERPAKNARITIFSSRPGVVIGKKGEDIELLKTELQRRMGVPVHVNIEEIRKPETDAQLIADSITQQLERRIMFRRAMKRAMQNAMRLGAQGIKIMSAGRLNGIEIARTEWYREGRVPLHTLRADIDYATSEAKTTYGIIGVKVWVYKGDTLGRNDAPVVEEVAEDKRPRRNARPGDRRPRRDGEGGAPGARRGAPRRGAGKPEDGKTGE</sequence>
<dbReference type="EMBL" id="CP000868">
    <property type="protein sequence ID" value="ABX13950.1"/>
    <property type="molecule type" value="Genomic_DNA"/>
</dbReference>
<dbReference type="EMBL" id="AP009385">
    <property type="protein sequence ID" value="BAG44884.1"/>
    <property type="molecule type" value="Genomic_DNA"/>
</dbReference>
<dbReference type="RefSeq" id="WP_006400654.1">
    <property type="nucleotide sequence ID" value="NC_010804.1"/>
</dbReference>
<dbReference type="SMR" id="A9ADJ9"/>
<dbReference type="STRING" id="395019.BMULJ_02999"/>
<dbReference type="GeneID" id="93126525"/>
<dbReference type="KEGG" id="bmj:BMULJ_02999"/>
<dbReference type="KEGG" id="bmu:Bmul_0255"/>
<dbReference type="eggNOG" id="COG0092">
    <property type="taxonomic scope" value="Bacteria"/>
</dbReference>
<dbReference type="HOGENOM" id="CLU_058591_0_2_4"/>
<dbReference type="Proteomes" id="UP000008815">
    <property type="component" value="Chromosome 1"/>
</dbReference>
<dbReference type="GO" id="GO:0022627">
    <property type="term" value="C:cytosolic small ribosomal subunit"/>
    <property type="evidence" value="ECO:0007669"/>
    <property type="project" value="TreeGrafter"/>
</dbReference>
<dbReference type="GO" id="GO:0003729">
    <property type="term" value="F:mRNA binding"/>
    <property type="evidence" value="ECO:0007669"/>
    <property type="project" value="UniProtKB-UniRule"/>
</dbReference>
<dbReference type="GO" id="GO:0019843">
    <property type="term" value="F:rRNA binding"/>
    <property type="evidence" value="ECO:0007669"/>
    <property type="project" value="UniProtKB-UniRule"/>
</dbReference>
<dbReference type="GO" id="GO:0003735">
    <property type="term" value="F:structural constituent of ribosome"/>
    <property type="evidence" value="ECO:0007669"/>
    <property type="project" value="InterPro"/>
</dbReference>
<dbReference type="GO" id="GO:0006412">
    <property type="term" value="P:translation"/>
    <property type="evidence" value="ECO:0007669"/>
    <property type="project" value="UniProtKB-UniRule"/>
</dbReference>
<dbReference type="CDD" id="cd02412">
    <property type="entry name" value="KH-II_30S_S3"/>
    <property type="match status" value="1"/>
</dbReference>
<dbReference type="FunFam" id="3.30.1140.32:FF:000006">
    <property type="entry name" value="30S ribosomal protein S3"/>
    <property type="match status" value="1"/>
</dbReference>
<dbReference type="FunFam" id="3.30.300.20:FF:000001">
    <property type="entry name" value="30S ribosomal protein S3"/>
    <property type="match status" value="1"/>
</dbReference>
<dbReference type="Gene3D" id="3.30.300.20">
    <property type="match status" value="1"/>
</dbReference>
<dbReference type="Gene3D" id="3.30.1140.32">
    <property type="entry name" value="Ribosomal protein S3, C-terminal domain"/>
    <property type="match status" value="1"/>
</dbReference>
<dbReference type="HAMAP" id="MF_01309_B">
    <property type="entry name" value="Ribosomal_uS3_B"/>
    <property type="match status" value="1"/>
</dbReference>
<dbReference type="InterPro" id="IPR004087">
    <property type="entry name" value="KH_dom"/>
</dbReference>
<dbReference type="InterPro" id="IPR015946">
    <property type="entry name" value="KH_dom-like_a/b"/>
</dbReference>
<dbReference type="InterPro" id="IPR004044">
    <property type="entry name" value="KH_dom_type_2"/>
</dbReference>
<dbReference type="InterPro" id="IPR009019">
    <property type="entry name" value="KH_sf_prok-type"/>
</dbReference>
<dbReference type="InterPro" id="IPR036419">
    <property type="entry name" value="Ribosomal_S3_C_sf"/>
</dbReference>
<dbReference type="InterPro" id="IPR005704">
    <property type="entry name" value="Ribosomal_uS3_bac-typ"/>
</dbReference>
<dbReference type="InterPro" id="IPR001351">
    <property type="entry name" value="Ribosomal_uS3_C"/>
</dbReference>
<dbReference type="InterPro" id="IPR018280">
    <property type="entry name" value="Ribosomal_uS3_CS"/>
</dbReference>
<dbReference type="NCBIfam" id="TIGR01009">
    <property type="entry name" value="rpsC_bact"/>
    <property type="match status" value="1"/>
</dbReference>
<dbReference type="PANTHER" id="PTHR11760">
    <property type="entry name" value="30S/40S RIBOSOMAL PROTEIN S3"/>
    <property type="match status" value="1"/>
</dbReference>
<dbReference type="PANTHER" id="PTHR11760:SF19">
    <property type="entry name" value="SMALL RIBOSOMAL SUBUNIT PROTEIN US3C"/>
    <property type="match status" value="1"/>
</dbReference>
<dbReference type="Pfam" id="PF07650">
    <property type="entry name" value="KH_2"/>
    <property type="match status" value="1"/>
</dbReference>
<dbReference type="Pfam" id="PF00189">
    <property type="entry name" value="Ribosomal_S3_C"/>
    <property type="match status" value="1"/>
</dbReference>
<dbReference type="SMART" id="SM00322">
    <property type="entry name" value="KH"/>
    <property type="match status" value="1"/>
</dbReference>
<dbReference type="SUPFAM" id="SSF54814">
    <property type="entry name" value="Prokaryotic type KH domain (KH-domain type II)"/>
    <property type="match status" value="1"/>
</dbReference>
<dbReference type="SUPFAM" id="SSF54821">
    <property type="entry name" value="Ribosomal protein S3 C-terminal domain"/>
    <property type="match status" value="1"/>
</dbReference>
<dbReference type="PROSITE" id="PS50823">
    <property type="entry name" value="KH_TYPE_2"/>
    <property type="match status" value="1"/>
</dbReference>
<dbReference type="PROSITE" id="PS00548">
    <property type="entry name" value="RIBOSOMAL_S3"/>
    <property type="match status" value="1"/>
</dbReference>
<protein>
    <recommendedName>
        <fullName evidence="1">Small ribosomal subunit protein uS3</fullName>
    </recommendedName>
    <alternativeName>
        <fullName evidence="3">30S ribosomal protein S3</fullName>
    </alternativeName>
</protein>
<gene>
    <name evidence="1" type="primary">rpsC</name>
    <name type="ordered locus">Bmul_0255</name>
    <name type="ordered locus">BMULJ_02999</name>
</gene>
<evidence type="ECO:0000255" key="1">
    <source>
        <dbReference type="HAMAP-Rule" id="MF_01309"/>
    </source>
</evidence>
<evidence type="ECO:0000256" key="2">
    <source>
        <dbReference type="SAM" id="MobiDB-lite"/>
    </source>
</evidence>
<evidence type="ECO:0000305" key="3"/>
<organism>
    <name type="scientific">Burkholderia multivorans (strain ATCC 17616 / 249)</name>
    <dbReference type="NCBI Taxonomy" id="395019"/>
    <lineage>
        <taxon>Bacteria</taxon>
        <taxon>Pseudomonadati</taxon>
        <taxon>Pseudomonadota</taxon>
        <taxon>Betaproteobacteria</taxon>
        <taxon>Burkholderiales</taxon>
        <taxon>Burkholderiaceae</taxon>
        <taxon>Burkholderia</taxon>
        <taxon>Burkholderia cepacia complex</taxon>
    </lineage>
</organism>
<reference key="1">
    <citation type="submission" date="2007-10" db="EMBL/GenBank/DDBJ databases">
        <title>Complete sequence of chromosome 1 of Burkholderia multivorans ATCC 17616.</title>
        <authorList>
            <person name="Copeland A."/>
            <person name="Lucas S."/>
            <person name="Lapidus A."/>
            <person name="Barry K."/>
            <person name="Glavina del Rio T."/>
            <person name="Dalin E."/>
            <person name="Tice H."/>
            <person name="Pitluck S."/>
            <person name="Chain P."/>
            <person name="Malfatti S."/>
            <person name="Shin M."/>
            <person name="Vergez L."/>
            <person name="Schmutz J."/>
            <person name="Larimer F."/>
            <person name="Land M."/>
            <person name="Hauser L."/>
            <person name="Kyrpides N."/>
            <person name="Kim E."/>
            <person name="Tiedje J."/>
            <person name="Richardson P."/>
        </authorList>
    </citation>
    <scope>NUCLEOTIDE SEQUENCE [LARGE SCALE GENOMIC DNA]</scope>
    <source>
        <strain>ATCC 17616 / 249</strain>
    </source>
</reference>
<reference key="2">
    <citation type="submission" date="2007-04" db="EMBL/GenBank/DDBJ databases">
        <title>Complete genome sequence of Burkholderia multivorans ATCC 17616.</title>
        <authorList>
            <person name="Ohtsubo Y."/>
            <person name="Yamashita A."/>
            <person name="Kurokawa K."/>
            <person name="Takami H."/>
            <person name="Yuhara S."/>
            <person name="Nishiyama E."/>
            <person name="Endo R."/>
            <person name="Miyazaki R."/>
            <person name="Ono A."/>
            <person name="Yano K."/>
            <person name="Ito M."/>
            <person name="Sota M."/>
            <person name="Yuji N."/>
            <person name="Hattori M."/>
            <person name="Tsuda M."/>
        </authorList>
    </citation>
    <scope>NUCLEOTIDE SEQUENCE [LARGE SCALE GENOMIC DNA]</scope>
    <source>
        <strain>ATCC 17616 / 249</strain>
    </source>
</reference>
<name>RS3_BURM1</name>
<comment type="function">
    <text evidence="1">Binds the lower part of the 30S subunit head. Binds mRNA in the 70S ribosome, positioning it for translation.</text>
</comment>
<comment type="subunit">
    <text evidence="1">Part of the 30S ribosomal subunit. Forms a tight complex with proteins S10 and S14.</text>
</comment>
<comment type="similarity">
    <text evidence="1">Belongs to the universal ribosomal protein uS3 family.</text>
</comment>
<feature type="chain" id="PRO_1000140933" description="Small ribosomal subunit protein uS3">
    <location>
        <begin position="1"/>
        <end position="266"/>
    </location>
</feature>
<feature type="domain" description="KH type-2" evidence="1">
    <location>
        <begin position="39"/>
        <end position="107"/>
    </location>
</feature>
<feature type="region of interest" description="Disordered" evidence="2">
    <location>
        <begin position="218"/>
        <end position="266"/>
    </location>
</feature>
<feature type="compositionally biased region" description="Basic and acidic residues" evidence="2">
    <location>
        <begin position="230"/>
        <end position="241"/>
    </location>
</feature>
<feature type="compositionally biased region" description="Basic and acidic residues" evidence="2">
    <location>
        <begin position="257"/>
        <end position="266"/>
    </location>
</feature>